<feature type="chain" id="PRO_1000001481" description="Holliday junction branch migration complex subunit RuvB">
    <location>
        <begin position="1"/>
        <end position="339"/>
    </location>
</feature>
<feature type="region of interest" description="Large ATPase domain (RuvB-L)" evidence="1">
    <location>
        <begin position="1"/>
        <end position="182"/>
    </location>
</feature>
<feature type="region of interest" description="Disordered" evidence="2">
    <location>
        <begin position="1"/>
        <end position="22"/>
    </location>
</feature>
<feature type="region of interest" description="Small ATPAse domain (RuvB-S)" evidence="1">
    <location>
        <begin position="183"/>
        <end position="253"/>
    </location>
</feature>
<feature type="region of interest" description="Head domain (RuvB-H)" evidence="1">
    <location>
        <begin position="256"/>
        <end position="339"/>
    </location>
</feature>
<feature type="binding site" evidence="1">
    <location>
        <position position="21"/>
    </location>
    <ligand>
        <name>ATP</name>
        <dbReference type="ChEBI" id="CHEBI:30616"/>
    </ligand>
</feature>
<feature type="binding site" evidence="1">
    <location>
        <position position="22"/>
    </location>
    <ligand>
        <name>ATP</name>
        <dbReference type="ChEBI" id="CHEBI:30616"/>
    </ligand>
</feature>
<feature type="binding site" evidence="1">
    <location>
        <position position="63"/>
    </location>
    <ligand>
        <name>ATP</name>
        <dbReference type="ChEBI" id="CHEBI:30616"/>
    </ligand>
</feature>
<feature type="binding site" evidence="1">
    <location>
        <position position="66"/>
    </location>
    <ligand>
        <name>ATP</name>
        <dbReference type="ChEBI" id="CHEBI:30616"/>
    </ligand>
</feature>
<feature type="binding site" evidence="1">
    <location>
        <position position="67"/>
    </location>
    <ligand>
        <name>ATP</name>
        <dbReference type="ChEBI" id="CHEBI:30616"/>
    </ligand>
</feature>
<feature type="binding site" evidence="1">
    <location>
        <position position="67"/>
    </location>
    <ligand>
        <name>Mg(2+)</name>
        <dbReference type="ChEBI" id="CHEBI:18420"/>
    </ligand>
</feature>
<feature type="binding site" evidence="1">
    <location>
        <position position="68"/>
    </location>
    <ligand>
        <name>ATP</name>
        <dbReference type="ChEBI" id="CHEBI:30616"/>
    </ligand>
</feature>
<feature type="binding site" evidence="1">
    <location>
        <begin position="129"/>
        <end position="131"/>
    </location>
    <ligand>
        <name>ATP</name>
        <dbReference type="ChEBI" id="CHEBI:30616"/>
    </ligand>
</feature>
<feature type="binding site" evidence="1">
    <location>
        <position position="172"/>
    </location>
    <ligand>
        <name>ATP</name>
        <dbReference type="ChEBI" id="CHEBI:30616"/>
    </ligand>
</feature>
<feature type="binding site" evidence="1">
    <location>
        <position position="182"/>
    </location>
    <ligand>
        <name>ATP</name>
        <dbReference type="ChEBI" id="CHEBI:30616"/>
    </ligand>
</feature>
<feature type="binding site" evidence="1">
    <location>
        <position position="219"/>
    </location>
    <ligand>
        <name>ATP</name>
        <dbReference type="ChEBI" id="CHEBI:30616"/>
    </ligand>
</feature>
<feature type="binding site" evidence="1">
    <location>
        <position position="292"/>
    </location>
    <ligand>
        <name>DNA</name>
        <dbReference type="ChEBI" id="CHEBI:16991"/>
    </ligand>
</feature>
<feature type="binding site" evidence="1">
    <location>
        <position position="311"/>
    </location>
    <ligand>
        <name>DNA</name>
        <dbReference type="ChEBI" id="CHEBI:16991"/>
    </ligand>
</feature>
<feature type="binding site" evidence="1">
    <location>
        <position position="316"/>
    </location>
    <ligand>
        <name>DNA</name>
        <dbReference type="ChEBI" id="CHEBI:16991"/>
    </ligand>
</feature>
<dbReference type="EC" id="3.6.4.-" evidence="1"/>
<dbReference type="EMBL" id="CP000377">
    <property type="protein sequence ID" value="ABF65103.1"/>
    <property type="molecule type" value="Genomic_DNA"/>
</dbReference>
<dbReference type="RefSeq" id="WP_011539691.1">
    <property type="nucleotide sequence ID" value="NC_008044.1"/>
</dbReference>
<dbReference type="SMR" id="Q1GE13"/>
<dbReference type="STRING" id="292414.TM1040_2371"/>
<dbReference type="KEGG" id="sit:TM1040_2371"/>
<dbReference type="eggNOG" id="COG2255">
    <property type="taxonomic scope" value="Bacteria"/>
</dbReference>
<dbReference type="HOGENOM" id="CLU_055599_1_0_5"/>
<dbReference type="OrthoDB" id="9804478at2"/>
<dbReference type="Proteomes" id="UP000000636">
    <property type="component" value="Chromosome"/>
</dbReference>
<dbReference type="GO" id="GO:0005737">
    <property type="term" value="C:cytoplasm"/>
    <property type="evidence" value="ECO:0007669"/>
    <property type="project" value="UniProtKB-SubCell"/>
</dbReference>
<dbReference type="GO" id="GO:0048476">
    <property type="term" value="C:Holliday junction resolvase complex"/>
    <property type="evidence" value="ECO:0007669"/>
    <property type="project" value="UniProtKB-UniRule"/>
</dbReference>
<dbReference type="GO" id="GO:0005524">
    <property type="term" value="F:ATP binding"/>
    <property type="evidence" value="ECO:0007669"/>
    <property type="project" value="UniProtKB-UniRule"/>
</dbReference>
<dbReference type="GO" id="GO:0016887">
    <property type="term" value="F:ATP hydrolysis activity"/>
    <property type="evidence" value="ECO:0007669"/>
    <property type="project" value="InterPro"/>
</dbReference>
<dbReference type="GO" id="GO:0000400">
    <property type="term" value="F:four-way junction DNA binding"/>
    <property type="evidence" value="ECO:0007669"/>
    <property type="project" value="UniProtKB-UniRule"/>
</dbReference>
<dbReference type="GO" id="GO:0009378">
    <property type="term" value="F:four-way junction helicase activity"/>
    <property type="evidence" value="ECO:0007669"/>
    <property type="project" value="InterPro"/>
</dbReference>
<dbReference type="GO" id="GO:0006310">
    <property type="term" value="P:DNA recombination"/>
    <property type="evidence" value="ECO:0007669"/>
    <property type="project" value="UniProtKB-UniRule"/>
</dbReference>
<dbReference type="GO" id="GO:0006281">
    <property type="term" value="P:DNA repair"/>
    <property type="evidence" value="ECO:0007669"/>
    <property type="project" value="UniProtKB-UniRule"/>
</dbReference>
<dbReference type="CDD" id="cd00009">
    <property type="entry name" value="AAA"/>
    <property type="match status" value="1"/>
</dbReference>
<dbReference type="Gene3D" id="1.10.8.60">
    <property type="match status" value="1"/>
</dbReference>
<dbReference type="Gene3D" id="3.40.50.300">
    <property type="entry name" value="P-loop containing nucleotide triphosphate hydrolases"/>
    <property type="match status" value="1"/>
</dbReference>
<dbReference type="Gene3D" id="1.10.10.10">
    <property type="entry name" value="Winged helix-like DNA-binding domain superfamily/Winged helix DNA-binding domain"/>
    <property type="match status" value="1"/>
</dbReference>
<dbReference type="HAMAP" id="MF_00016">
    <property type="entry name" value="DNA_HJ_migration_RuvB"/>
    <property type="match status" value="1"/>
</dbReference>
<dbReference type="InterPro" id="IPR003593">
    <property type="entry name" value="AAA+_ATPase"/>
</dbReference>
<dbReference type="InterPro" id="IPR041445">
    <property type="entry name" value="AAA_lid_4"/>
</dbReference>
<dbReference type="InterPro" id="IPR000641">
    <property type="entry name" value="CbxX/CfxQ"/>
</dbReference>
<dbReference type="InterPro" id="IPR004605">
    <property type="entry name" value="DNA_helicase_Holl-junc_RuvB"/>
</dbReference>
<dbReference type="InterPro" id="IPR027417">
    <property type="entry name" value="P-loop_NTPase"/>
</dbReference>
<dbReference type="InterPro" id="IPR008824">
    <property type="entry name" value="RuvB-like_N"/>
</dbReference>
<dbReference type="InterPro" id="IPR008823">
    <property type="entry name" value="RuvB_C"/>
</dbReference>
<dbReference type="InterPro" id="IPR036388">
    <property type="entry name" value="WH-like_DNA-bd_sf"/>
</dbReference>
<dbReference type="InterPro" id="IPR036390">
    <property type="entry name" value="WH_DNA-bd_sf"/>
</dbReference>
<dbReference type="NCBIfam" id="NF000868">
    <property type="entry name" value="PRK00080.1"/>
    <property type="match status" value="1"/>
</dbReference>
<dbReference type="NCBIfam" id="TIGR00635">
    <property type="entry name" value="ruvB"/>
    <property type="match status" value="1"/>
</dbReference>
<dbReference type="PANTHER" id="PTHR42848">
    <property type="match status" value="1"/>
</dbReference>
<dbReference type="PANTHER" id="PTHR42848:SF1">
    <property type="entry name" value="HOLLIDAY JUNCTION BRANCH MIGRATION COMPLEX SUBUNIT RUVB"/>
    <property type="match status" value="1"/>
</dbReference>
<dbReference type="Pfam" id="PF17864">
    <property type="entry name" value="AAA_lid_4"/>
    <property type="match status" value="1"/>
</dbReference>
<dbReference type="Pfam" id="PF05491">
    <property type="entry name" value="RuvB_C"/>
    <property type="match status" value="1"/>
</dbReference>
<dbReference type="Pfam" id="PF05496">
    <property type="entry name" value="RuvB_N"/>
    <property type="match status" value="1"/>
</dbReference>
<dbReference type="PRINTS" id="PR00819">
    <property type="entry name" value="CBXCFQXSUPER"/>
</dbReference>
<dbReference type="SMART" id="SM00382">
    <property type="entry name" value="AAA"/>
    <property type="match status" value="1"/>
</dbReference>
<dbReference type="SUPFAM" id="SSF52540">
    <property type="entry name" value="P-loop containing nucleoside triphosphate hydrolases"/>
    <property type="match status" value="1"/>
</dbReference>
<dbReference type="SUPFAM" id="SSF46785">
    <property type="entry name" value="Winged helix' DNA-binding domain"/>
    <property type="match status" value="1"/>
</dbReference>
<accession>Q1GE13</accession>
<reference key="1">
    <citation type="submission" date="2006-05" db="EMBL/GenBank/DDBJ databases">
        <title>Complete sequence of chromosome of Silicibacter sp. TM1040.</title>
        <authorList>
            <consortium name="US DOE Joint Genome Institute"/>
            <person name="Copeland A."/>
            <person name="Lucas S."/>
            <person name="Lapidus A."/>
            <person name="Barry K."/>
            <person name="Detter J.C."/>
            <person name="Glavina del Rio T."/>
            <person name="Hammon N."/>
            <person name="Israni S."/>
            <person name="Dalin E."/>
            <person name="Tice H."/>
            <person name="Pitluck S."/>
            <person name="Brettin T."/>
            <person name="Bruce D."/>
            <person name="Han C."/>
            <person name="Tapia R."/>
            <person name="Goodwin L."/>
            <person name="Thompson L.S."/>
            <person name="Gilna P."/>
            <person name="Schmutz J."/>
            <person name="Larimer F."/>
            <person name="Land M."/>
            <person name="Hauser L."/>
            <person name="Kyrpides N."/>
            <person name="Kim E."/>
            <person name="Belas R."/>
            <person name="Moran M.A."/>
            <person name="Buchan A."/>
            <person name="Gonzalez J.M."/>
            <person name="Schell M.A."/>
            <person name="Sun F."/>
            <person name="Richardson P."/>
        </authorList>
    </citation>
    <scope>NUCLEOTIDE SEQUENCE [LARGE SCALE GENOMIC DNA]</scope>
    <source>
        <strain>TM1040</strain>
    </source>
</reference>
<proteinExistence type="inferred from homology"/>
<sequence>MIDADPTLRPEPLPEDNDRALRPQGLGEFIGQAEARANLRVFIESARRRGEAMDHTLFHGPPGLGKTTLAQIVARELGVNFRMTSGPVLAKAGDLAAILTNLEARDVLFIDEIHRLNPAVEEVLYPAMEDFELDLVIGEGPAARTVRIELQPFTLVGATTRMGLLTTPLRDRFGIPTRLQFYTIDELFEIVSRNARKLGAPADDAGAREIARRARGTPRIAGRLLRRVVDFAVVEGDGTITRELADGALTRLGVDQLGLDGADRRYLRLVAENYGGGPVGIETMSAALSESRDALEEVIEPYLLQQGLIQRTPRGRMLAQKAWTHLGIAPPKSQSDLFG</sequence>
<protein>
    <recommendedName>
        <fullName evidence="1">Holliday junction branch migration complex subunit RuvB</fullName>
        <ecNumber evidence="1">3.6.4.-</ecNumber>
    </recommendedName>
</protein>
<comment type="function">
    <text evidence="1">The RuvA-RuvB-RuvC complex processes Holliday junction (HJ) DNA during genetic recombination and DNA repair, while the RuvA-RuvB complex plays an important role in the rescue of blocked DNA replication forks via replication fork reversal (RFR). RuvA specifically binds to HJ cruciform DNA, conferring on it an open structure. The RuvB hexamer acts as an ATP-dependent pump, pulling dsDNA into and through the RuvAB complex. RuvB forms 2 homohexamers on either side of HJ DNA bound by 1 or 2 RuvA tetramers; 4 subunits per hexamer contact DNA at a time. Coordinated motions by a converter formed by DNA-disengaged RuvB subunits stimulates ATP hydrolysis and nucleotide exchange. Immobilization of the converter enables RuvB to convert the ATP-contained energy into a lever motion, pulling 2 nucleotides of DNA out of the RuvA tetramer per ATP hydrolyzed, thus driving DNA branch migration. The RuvB motors rotate together with the DNA substrate, which together with the progressing nucleotide cycle form the mechanistic basis for DNA recombination by continuous HJ branch migration. Branch migration allows RuvC to scan DNA until it finds its consensus sequence, where it cleaves and resolves cruciform DNA.</text>
</comment>
<comment type="catalytic activity">
    <reaction evidence="1">
        <text>ATP + H2O = ADP + phosphate + H(+)</text>
        <dbReference type="Rhea" id="RHEA:13065"/>
        <dbReference type="ChEBI" id="CHEBI:15377"/>
        <dbReference type="ChEBI" id="CHEBI:15378"/>
        <dbReference type="ChEBI" id="CHEBI:30616"/>
        <dbReference type="ChEBI" id="CHEBI:43474"/>
        <dbReference type="ChEBI" id="CHEBI:456216"/>
    </reaction>
</comment>
<comment type="subunit">
    <text evidence="1">Homohexamer. Forms an RuvA(8)-RuvB(12)-Holliday junction (HJ) complex. HJ DNA is sandwiched between 2 RuvA tetramers; dsDNA enters through RuvA and exits via RuvB. An RuvB hexamer assembles on each DNA strand where it exits the tetramer. Each RuvB hexamer is contacted by two RuvA subunits (via domain III) on 2 adjacent RuvB subunits; this complex drives branch migration. In the full resolvosome a probable DNA-RuvA(4)-RuvB(12)-RuvC(2) complex forms which resolves the HJ.</text>
</comment>
<comment type="subcellular location">
    <subcellularLocation>
        <location evidence="1">Cytoplasm</location>
    </subcellularLocation>
</comment>
<comment type="domain">
    <text evidence="1">Has 3 domains, the large (RuvB-L) and small ATPase (RuvB-S) domains and the C-terminal head (RuvB-H) domain. The head domain binds DNA, while the ATPase domains jointly bind ATP, ADP or are empty depending on the state of the subunit in the translocation cycle. During a single DNA translocation step the structure of each domain remains the same, but their relative positions change.</text>
</comment>
<comment type="similarity">
    <text evidence="1">Belongs to the RuvB family.</text>
</comment>
<organism>
    <name type="scientific">Ruegeria sp. (strain TM1040)</name>
    <name type="common">Silicibacter sp.</name>
    <dbReference type="NCBI Taxonomy" id="292414"/>
    <lineage>
        <taxon>Bacteria</taxon>
        <taxon>Pseudomonadati</taxon>
        <taxon>Pseudomonadota</taxon>
        <taxon>Alphaproteobacteria</taxon>
        <taxon>Rhodobacterales</taxon>
        <taxon>Roseobacteraceae</taxon>
        <taxon>Ruegeria</taxon>
    </lineage>
</organism>
<name>RUVB_RUEST</name>
<evidence type="ECO:0000255" key="1">
    <source>
        <dbReference type="HAMAP-Rule" id="MF_00016"/>
    </source>
</evidence>
<evidence type="ECO:0000256" key="2">
    <source>
        <dbReference type="SAM" id="MobiDB-lite"/>
    </source>
</evidence>
<keyword id="KW-0067">ATP-binding</keyword>
<keyword id="KW-0963">Cytoplasm</keyword>
<keyword id="KW-0227">DNA damage</keyword>
<keyword id="KW-0233">DNA recombination</keyword>
<keyword id="KW-0234">DNA repair</keyword>
<keyword id="KW-0238">DNA-binding</keyword>
<keyword id="KW-0378">Hydrolase</keyword>
<keyword id="KW-0547">Nucleotide-binding</keyword>
<keyword id="KW-1185">Reference proteome</keyword>
<gene>
    <name evidence="1" type="primary">ruvB</name>
    <name type="ordered locus">TM1040_2371</name>
</gene>